<organism>
    <name type="scientific">Thermoanaerobacter pseudethanolicus (strain ATCC 33223 / 39E)</name>
    <name type="common">Clostridium thermohydrosulfuricum</name>
    <dbReference type="NCBI Taxonomy" id="340099"/>
    <lineage>
        <taxon>Bacteria</taxon>
        <taxon>Bacillati</taxon>
        <taxon>Bacillota</taxon>
        <taxon>Clostridia</taxon>
        <taxon>Thermoanaerobacterales</taxon>
        <taxon>Thermoanaerobacteraceae</taxon>
        <taxon>Thermoanaerobacter</taxon>
    </lineage>
</organism>
<proteinExistence type="inferred from homology"/>
<gene>
    <name evidence="1" type="primary">argC</name>
    <name type="ordered locus">Teth39_0223</name>
</gene>
<dbReference type="EC" id="1.2.1.38" evidence="1"/>
<dbReference type="EMBL" id="CP000924">
    <property type="protein sequence ID" value="ABY93895.1"/>
    <property type="molecule type" value="Genomic_DNA"/>
</dbReference>
<dbReference type="RefSeq" id="WP_012268930.1">
    <property type="nucleotide sequence ID" value="NC_010321.1"/>
</dbReference>
<dbReference type="SMR" id="B0KBV9"/>
<dbReference type="STRING" id="340099.Teth39_0223"/>
<dbReference type="KEGG" id="tpd:Teth39_0223"/>
<dbReference type="eggNOG" id="COG0002">
    <property type="taxonomic scope" value="Bacteria"/>
</dbReference>
<dbReference type="HOGENOM" id="CLU_006384_0_1_9"/>
<dbReference type="UniPathway" id="UPA00068">
    <property type="reaction ID" value="UER00108"/>
</dbReference>
<dbReference type="Proteomes" id="UP000002156">
    <property type="component" value="Chromosome"/>
</dbReference>
<dbReference type="GO" id="GO:0005737">
    <property type="term" value="C:cytoplasm"/>
    <property type="evidence" value="ECO:0007669"/>
    <property type="project" value="UniProtKB-SubCell"/>
</dbReference>
<dbReference type="GO" id="GO:0003942">
    <property type="term" value="F:N-acetyl-gamma-glutamyl-phosphate reductase activity"/>
    <property type="evidence" value="ECO:0007669"/>
    <property type="project" value="UniProtKB-UniRule"/>
</dbReference>
<dbReference type="GO" id="GO:0051287">
    <property type="term" value="F:NAD binding"/>
    <property type="evidence" value="ECO:0007669"/>
    <property type="project" value="InterPro"/>
</dbReference>
<dbReference type="GO" id="GO:0070401">
    <property type="term" value="F:NADP+ binding"/>
    <property type="evidence" value="ECO:0007669"/>
    <property type="project" value="InterPro"/>
</dbReference>
<dbReference type="GO" id="GO:0006526">
    <property type="term" value="P:L-arginine biosynthetic process"/>
    <property type="evidence" value="ECO:0007669"/>
    <property type="project" value="UniProtKB-UniRule"/>
</dbReference>
<dbReference type="CDD" id="cd23934">
    <property type="entry name" value="AGPR_1_C"/>
    <property type="match status" value="1"/>
</dbReference>
<dbReference type="CDD" id="cd17895">
    <property type="entry name" value="AGPR_1_N"/>
    <property type="match status" value="1"/>
</dbReference>
<dbReference type="FunFam" id="3.30.360.10:FF:000014">
    <property type="entry name" value="N-acetyl-gamma-glutamyl-phosphate reductase"/>
    <property type="match status" value="1"/>
</dbReference>
<dbReference type="Gene3D" id="3.30.360.10">
    <property type="entry name" value="Dihydrodipicolinate Reductase, domain 2"/>
    <property type="match status" value="1"/>
</dbReference>
<dbReference type="Gene3D" id="3.40.50.720">
    <property type="entry name" value="NAD(P)-binding Rossmann-like Domain"/>
    <property type="match status" value="1"/>
</dbReference>
<dbReference type="HAMAP" id="MF_00150">
    <property type="entry name" value="ArgC_type1"/>
    <property type="match status" value="1"/>
</dbReference>
<dbReference type="InterPro" id="IPR023013">
    <property type="entry name" value="AGPR_AS"/>
</dbReference>
<dbReference type="InterPro" id="IPR000706">
    <property type="entry name" value="AGPR_type-1"/>
</dbReference>
<dbReference type="InterPro" id="IPR036291">
    <property type="entry name" value="NAD(P)-bd_dom_sf"/>
</dbReference>
<dbReference type="InterPro" id="IPR050085">
    <property type="entry name" value="NAGSA_dehydrogenase"/>
</dbReference>
<dbReference type="InterPro" id="IPR000534">
    <property type="entry name" value="Semialdehyde_DH_NAD-bd"/>
</dbReference>
<dbReference type="NCBIfam" id="TIGR01850">
    <property type="entry name" value="argC"/>
    <property type="match status" value="1"/>
</dbReference>
<dbReference type="PANTHER" id="PTHR32338:SF10">
    <property type="entry name" value="N-ACETYL-GAMMA-GLUTAMYL-PHOSPHATE REDUCTASE, CHLOROPLASTIC-RELATED"/>
    <property type="match status" value="1"/>
</dbReference>
<dbReference type="PANTHER" id="PTHR32338">
    <property type="entry name" value="N-ACETYL-GAMMA-GLUTAMYL-PHOSPHATE REDUCTASE, CHLOROPLASTIC-RELATED-RELATED"/>
    <property type="match status" value="1"/>
</dbReference>
<dbReference type="Pfam" id="PF01118">
    <property type="entry name" value="Semialdhyde_dh"/>
    <property type="match status" value="1"/>
</dbReference>
<dbReference type="Pfam" id="PF22698">
    <property type="entry name" value="Semialdhyde_dhC_1"/>
    <property type="match status" value="1"/>
</dbReference>
<dbReference type="SMART" id="SM00859">
    <property type="entry name" value="Semialdhyde_dh"/>
    <property type="match status" value="1"/>
</dbReference>
<dbReference type="SUPFAM" id="SSF55347">
    <property type="entry name" value="Glyceraldehyde-3-phosphate dehydrogenase-like, C-terminal domain"/>
    <property type="match status" value="1"/>
</dbReference>
<dbReference type="SUPFAM" id="SSF51735">
    <property type="entry name" value="NAD(P)-binding Rossmann-fold domains"/>
    <property type="match status" value="1"/>
</dbReference>
<dbReference type="PROSITE" id="PS01224">
    <property type="entry name" value="ARGC"/>
    <property type="match status" value="1"/>
</dbReference>
<reference key="1">
    <citation type="submission" date="2008-01" db="EMBL/GenBank/DDBJ databases">
        <title>Complete sequence of Thermoanaerobacter pseudethanolicus 39E.</title>
        <authorList>
            <person name="Copeland A."/>
            <person name="Lucas S."/>
            <person name="Lapidus A."/>
            <person name="Barry K."/>
            <person name="Glavina del Rio T."/>
            <person name="Dalin E."/>
            <person name="Tice H."/>
            <person name="Pitluck S."/>
            <person name="Bruce D."/>
            <person name="Goodwin L."/>
            <person name="Saunders E."/>
            <person name="Brettin T."/>
            <person name="Detter J.C."/>
            <person name="Han C."/>
            <person name="Schmutz J."/>
            <person name="Larimer F."/>
            <person name="Land M."/>
            <person name="Hauser L."/>
            <person name="Kyrpides N."/>
            <person name="Lykidis A."/>
            <person name="Hemme C."/>
            <person name="Fields M.W."/>
            <person name="He Z."/>
            <person name="Zhou J."/>
            <person name="Richardson P."/>
        </authorList>
    </citation>
    <scope>NUCLEOTIDE SEQUENCE [LARGE SCALE GENOMIC DNA]</scope>
    <source>
        <strain>ATCC 33223 / DSM 2355 / 39E</strain>
    </source>
</reference>
<protein>
    <recommendedName>
        <fullName evidence="1">N-acetyl-gamma-glutamyl-phosphate reductase</fullName>
        <shortName evidence="1">AGPR</shortName>
        <ecNumber evidence="1">1.2.1.38</ecNumber>
    </recommendedName>
    <alternativeName>
        <fullName evidence="1">N-acetyl-glutamate semialdehyde dehydrogenase</fullName>
        <shortName evidence="1">NAGSA dehydrogenase</shortName>
    </alternativeName>
</protein>
<sequence length="344" mass="38436">MVKVGIFGATGYTGVELIRILSKHEKVEIKYLSSQSYNTKAISDVYSSLIGFCDKVLEEVDFQKAMSECDVIFTALPSGHASKIAREAVKKGVKVIDLGADFRFDDYSVYKEWYSGDYEDYGDIKRVYGIPEIYRDDIKEAQVVGNPGCYPTSVILGLMPLLKNGIIEGNIIVDSKSGVSGAGHNPSYNNMYAECNENIKAYNVAKHRHIPEMEQELSKIFGEKVSVVFTPHLAPMTRGILSTMYCKLKKDMDVNTVYNIYTDFYKNEYFVKVLKPGNYPATKNVYGSNFCHIGFEVDKHTNTLIVMSAIDNLVKGASGQAVQNMNIMFGIEENTALDIVPIYP</sequence>
<name>ARGC_THEP3</name>
<comment type="function">
    <text evidence="1">Catalyzes the NADPH-dependent reduction of N-acetyl-5-glutamyl phosphate to yield N-acetyl-L-glutamate 5-semialdehyde.</text>
</comment>
<comment type="catalytic activity">
    <reaction evidence="1">
        <text>N-acetyl-L-glutamate 5-semialdehyde + phosphate + NADP(+) = N-acetyl-L-glutamyl 5-phosphate + NADPH + H(+)</text>
        <dbReference type="Rhea" id="RHEA:21588"/>
        <dbReference type="ChEBI" id="CHEBI:15378"/>
        <dbReference type="ChEBI" id="CHEBI:29123"/>
        <dbReference type="ChEBI" id="CHEBI:43474"/>
        <dbReference type="ChEBI" id="CHEBI:57783"/>
        <dbReference type="ChEBI" id="CHEBI:57936"/>
        <dbReference type="ChEBI" id="CHEBI:58349"/>
        <dbReference type="EC" id="1.2.1.38"/>
    </reaction>
</comment>
<comment type="pathway">
    <text evidence="1">Amino-acid biosynthesis; L-arginine biosynthesis; N(2)-acetyl-L-ornithine from L-glutamate: step 3/4.</text>
</comment>
<comment type="subcellular location">
    <subcellularLocation>
        <location evidence="1">Cytoplasm</location>
    </subcellularLocation>
</comment>
<comment type="similarity">
    <text evidence="1">Belongs to the NAGSA dehydrogenase family. Type 1 subfamily.</text>
</comment>
<accession>B0KBV9</accession>
<evidence type="ECO:0000255" key="1">
    <source>
        <dbReference type="HAMAP-Rule" id="MF_00150"/>
    </source>
</evidence>
<keyword id="KW-0028">Amino-acid biosynthesis</keyword>
<keyword id="KW-0055">Arginine biosynthesis</keyword>
<keyword id="KW-0963">Cytoplasm</keyword>
<keyword id="KW-0521">NADP</keyword>
<keyword id="KW-0560">Oxidoreductase</keyword>
<keyword id="KW-1185">Reference proteome</keyword>
<feature type="chain" id="PRO_1000096743" description="N-acetyl-gamma-glutamyl-phosphate reductase">
    <location>
        <begin position="1"/>
        <end position="344"/>
    </location>
</feature>
<feature type="active site" evidence="1">
    <location>
        <position position="149"/>
    </location>
</feature>